<evidence type="ECO:0000250" key="1"/>
<evidence type="ECO:0000305" key="2"/>
<dbReference type="EMBL" id="AAFW02000151">
    <property type="protein sequence ID" value="EDN60009.1"/>
    <property type="molecule type" value="Genomic_DNA"/>
</dbReference>
<dbReference type="HOGENOM" id="CLU_039662_0_0_1"/>
<dbReference type="OrthoDB" id="38047at4893"/>
<dbReference type="Proteomes" id="UP000007060">
    <property type="component" value="Unassembled WGS sequence"/>
</dbReference>
<dbReference type="GO" id="GO:0005576">
    <property type="term" value="C:extracellular region"/>
    <property type="evidence" value="ECO:0007669"/>
    <property type="project" value="UniProtKB-KW"/>
</dbReference>
<dbReference type="GO" id="GO:0009277">
    <property type="term" value="C:fungal-type cell wall"/>
    <property type="evidence" value="ECO:0007669"/>
    <property type="project" value="TreeGrafter"/>
</dbReference>
<dbReference type="GO" id="GO:0005199">
    <property type="term" value="F:structural constituent of cell wall"/>
    <property type="evidence" value="ECO:0007669"/>
    <property type="project" value="InterPro"/>
</dbReference>
<dbReference type="GO" id="GO:0031505">
    <property type="term" value="P:fungal-type cell wall organization"/>
    <property type="evidence" value="ECO:0007669"/>
    <property type="project" value="UniProtKB-ARBA"/>
</dbReference>
<dbReference type="InterPro" id="IPR054508">
    <property type="entry name" value="PIR1-like_C"/>
</dbReference>
<dbReference type="InterPro" id="IPR051153">
    <property type="entry name" value="Yeast_CWMannoprotein_PIR"/>
</dbReference>
<dbReference type="InterPro" id="IPR000420">
    <property type="entry name" value="Yeast_PIR_rpt"/>
</dbReference>
<dbReference type="PANTHER" id="PTHR47254">
    <property type="entry name" value="CELL WALL MANNOPROTEIN CIS3-RELATED"/>
    <property type="match status" value="1"/>
</dbReference>
<dbReference type="PANTHER" id="PTHR47254:SF1">
    <property type="entry name" value="CELL WALL MANNOPROTEIN CIS3-RELATED"/>
    <property type="match status" value="1"/>
</dbReference>
<dbReference type="Pfam" id="PF00399">
    <property type="entry name" value="PIR"/>
    <property type="match status" value="12"/>
</dbReference>
<dbReference type="Pfam" id="PF22799">
    <property type="entry name" value="PIR1-like_C"/>
    <property type="match status" value="1"/>
</dbReference>
<dbReference type="PROSITE" id="PS00929">
    <property type="entry name" value="PIR_REPEAT_1"/>
    <property type="match status" value="13"/>
</dbReference>
<dbReference type="PROSITE" id="PS50256">
    <property type="entry name" value="PIR_REPEAT_2"/>
    <property type="match status" value="13"/>
</dbReference>
<organism>
    <name type="scientific">Saccharomyces cerevisiae (strain YJM789)</name>
    <name type="common">Baker's yeast</name>
    <dbReference type="NCBI Taxonomy" id="307796"/>
    <lineage>
        <taxon>Eukaryota</taxon>
        <taxon>Fungi</taxon>
        <taxon>Dikarya</taxon>
        <taxon>Ascomycota</taxon>
        <taxon>Saccharomycotina</taxon>
        <taxon>Saccharomycetes</taxon>
        <taxon>Saccharomycetales</taxon>
        <taxon>Saccharomycetaceae</taxon>
        <taxon>Saccharomyces</taxon>
    </lineage>
</organism>
<proteinExistence type="inferred from homology"/>
<protein>
    <recommendedName>
        <fullName>Cell wall mannoprotein PIR3</fullName>
    </recommendedName>
    <alternativeName>
        <fullName>Covalently-linked cell wall protein 8</fullName>
    </alternativeName>
    <alternativeName>
        <fullName>Protein with internal repeats 3</fullName>
    </alternativeName>
</protein>
<feature type="signal peptide" evidence="1">
    <location>
        <begin position="1"/>
        <end position="18"/>
    </location>
</feature>
<feature type="propeptide" id="PRO_0000377608" evidence="1">
    <location>
        <begin position="19"/>
        <end position="67"/>
    </location>
</feature>
<feature type="chain" id="PRO_0000377609" description="Cell wall mannoprotein PIR3">
    <location>
        <begin position="68"/>
        <end position="415"/>
    </location>
</feature>
<feature type="repeat" description="PIR1/2/3 1">
    <location>
        <begin position="66"/>
        <end position="84"/>
    </location>
</feature>
<feature type="repeat" description="PIR1/2/3 2">
    <location>
        <begin position="92"/>
        <end position="109"/>
    </location>
</feature>
<feature type="repeat" description="PIR1/2/3 3">
    <location>
        <begin position="110"/>
        <end position="127"/>
    </location>
</feature>
<feature type="repeat" description="PIR1/2/3 4">
    <location>
        <begin position="128"/>
        <end position="145"/>
    </location>
</feature>
<feature type="repeat" description="PIR1/2/3 5">
    <location>
        <begin position="146"/>
        <end position="163"/>
    </location>
</feature>
<feature type="repeat" description="PIR1/2/3 6">
    <location>
        <begin position="164"/>
        <end position="181"/>
    </location>
</feature>
<feature type="repeat" description="PIR1/2/3 7">
    <location>
        <begin position="182"/>
        <end position="199"/>
    </location>
</feature>
<feature type="repeat" description="PIR1/2/3 8">
    <location>
        <begin position="200"/>
        <end position="217"/>
    </location>
</feature>
<feature type="repeat" description="PIR1/2/3 9">
    <location>
        <begin position="218"/>
        <end position="235"/>
    </location>
</feature>
<feature type="repeat" description="PIR1/2/3 10">
    <location>
        <begin position="236"/>
        <end position="253"/>
    </location>
</feature>
<feature type="repeat" description="PIR1/2/3 11">
    <location>
        <begin position="254"/>
        <end position="271"/>
    </location>
</feature>
<feature type="repeat" description="PIR1/2/3 12">
    <location>
        <begin position="272"/>
        <end position="288"/>
    </location>
</feature>
<feature type="repeat" description="PIR1/2/3 13">
    <location>
        <begin position="289"/>
        <end position="307"/>
    </location>
</feature>
<feature type="site" description="Cleavage; by KEX2" evidence="1">
    <location>
        <begin position="67"/>
        <end position="68"/>
    </location>
</feature>
<feature type="site" description="Covalent attachment to cell wall glycan" evidence="1">
    <location>
        <position position="76"/>
    </location>
</feature>
<feature type="site" description="Covalent attachment to cell wall glycan" evidence="1">
    <location>
        <position position="102"/>
    </location>
</feature>
<feature type="site" description="Covalent attachment to cell wall glycan" evidence="1">
    <location>
        <position position="120"/>
    </location>
</feature>
<feature type="site" description="Covalent attachment to cell wall glycan" evidence="1">
    <location>
        <position position="138"/>
    </location>
</feature>
<feature type="site" description="Covalent attachment to cell wall glycan" evidence="1">
    <location>
        <position position="156"/>
    </location>
</feature>
<feature type="site" description="Covalent attachment to cell wall glycan" evidence="1">
    <location>
        <position position="174"/>
    </location>
</feature>
<feature type="site" description="Covalent attachment to cell wall glycan" evidence="1">
    <location>
        <position position="192"/>
    </location>
</feature>
<feature type="site" description="Covalent attachment to cell wall glycan" evidence="1">
    <location>
        <position position="210"/>
    </location>
</feature>
<feature type="site" description="Covalent attachment to cell wall glycan" evidence="1">
    <location>
        <position position="228"/>
    </location>
</feature>
<feature type="site" description="Covalent attachment to cell wall glycan" evidence="1">
    <location>
        <position position="246"/>
    </location>
</feature>
<feature type="site" description="Covalent attachment to cell wall glycan" evidence="1">
    <location>
        <position position="264"/>
    </location>
</feature>
<feature type="site" description="Covalent attachment to cell wall glycan" evidence="1">
    <location>
        <position position="282"/>
    </location>
</feature>
<feature type="site" description="Covalent attachment to cell wall glycan" evidence="1">
    <location>
        <position position="299"/>
    </location>
</feature>
<keyword id="KW-0134">Cell wall</keyword>
<keyword id="KW-0961">Cell wall biogenesis/degradation</keyword>
<keyword id="KW-0165">Cleavage on pair of basic residues</keyword>
<keyword id="KW-0325">Glycoprotein</keyword>
<keyword id="KW-0677">Repeat</keyword>
<keyword id="KW-0964">Secreted</keyword>
<keyword id="KW-0732">Signal</keyword>
<sequence length="415" mass="41476">MQYKKPLVVSALAATSLAAYAPKDPWSTLTPSATYKGGITDYSSSFGIAIEAVATSASSVASSKAKRAASQIGDGQVQAATTTAAVSKKSTAAAVSQITDGQVQAAKSTAAAASQISDGQVQAAKSTAAAVSQITDGQVQAAKSTAAAVSQITDGQVQAAKSTAAAVSQITDGQVQAAKSTAAAVSQITDGQVQAAKSTAAAASQISDGQVQAAKSTAAAASQISDGQVQAAKSTAAAASQISDGQVQAAKSTAAAASQISDGQVQATTSTKAAASQITDGQIQASKTTSGASQVSDGQVQATAEVKDANDPVDVVSCNNNSTLSMSLSKGILTDRKGRIGSIVANRQFQFDGPPPQAGAIYAAGWSITPEGNLALGDQDTFYQCLSGDFYNLYDKHIGSQCHEVYLQAIDLIDC</sequence>
<comment type="function">
    <text evidence="1">Component of the outer cell wall layer. Required for stability of the cell wall and for optimal growth. Required for resistance against several antifungal and cell wall-perturbing agents (By similarity).</text>
</comment>
<comment type="subcellular location">
    <subcellularLocation>
        <location evidence="1">Secreted</location>
        <location evidence="1">Cell wall</location>
    </subcellularLocation>
    <text evidence="1">Covalently attached to the cell wall.</text>
</comment>
<comment type="domain">
    <text evidence="1">The PIR1/2/3 repeats are required for the covalent linkage to the cell wall (By similarity). Their number varies among different strains of S.cerevisiae.</text>
</comment>
<comment type="PTM">
    <text evidence="1">Covalently linked to beta-1,3-glucan of the inner cell wall layer via an alkali-sensitive ester linkage between the gamma-carboxyl group of glutamic acids, arising from specific glutamines within the PIR1/2/3 repeats, and hydroxyl groups of glucoses of beta-1,3-glucan chains.</text>
</comment>
<comment type="PTM">
    <text evidence="1">O-glycosylated. Extensively O-mannosylated (By similarity).</text>
</comment>
<comment type="similarity">
    <text evidence="2">Belongs to the PIR protein family.</text>
</comment>
<gene>
    <name type="primary">PIR3</name>
    <name type="ORF">SCY_3221</name>
</gene>
<accession>A6ZZG1</accession>
<reference key="1">
    <citation type="journal article" date="2007" name="Proc. Natl. Acad. Sci. U.S.A.">
        <title>Genome sequencing and comparative analysis of Saccharomyces cerevisiae strain YJM789.</title>
        <authorList>
            <person name="Wei W."/>
            <person name="McCusker J.H."/>
            <person name="Hyman R.W."/>
            <person name="Jones T."/>
            <person name="Ning Y."/>
            <person name="Cao Z."/>
            <person name="Gu Z."/>
            <person name="Bruno D."/>
            <person name="Miranda M."/>
            <person name="Nguyen M."/>
            <person name="Wilhelmy J."/>
            <person name="Komp C."/>
            <person name="Tamse R."/>
            <person name="Wang X."/>
            <person name="Jia P."/>
            <person name="Luedi P."/>
            <person name="Oefner P.J."/>
            <person name="David L."/>
            <person name="Dietrich F.S."/>
            <person name="Li Y."/>
            <person name="Davis R.W."/>
            <person name="Steinmetz L.M."/>
        </authorList>
    </citation>
    <scope>NUCLEOTIDE SEQUENCE [LARGE SCALE GENOMIC DNA]</scope>
    <source>
        <strain>YJM789</strain>
    </source>
</reference>
<name>PIR3_YEAS7</name>